<evidence type="ECO:0000255" key="1">
    <source>
        <dbReference type="PROSITE-ProRule" id="PRU01020"/>
    </source>
</evidence>
<evidence type="ECO:0000269" key="2">
    <source>
    </source>
</evidence>
<evidence type="ECO:0000303" key="3">
    <source>
    </source>
</evidence>
<evidence type="ECO:0000305" key="4"/>
<evidence type="ECO:0000305" key="5">
    <source>
    </source>
</evidence>
<gene>
    <name evidence="3" type="primary">SAT18</name>
    <name type="ORF">S7711_07409</name>
</gene>
<protein>
    <recommendedName>
        <fullName evidence="3">O-methyltransferase SAT18</fullName>
        <ecNumber evidence="1">2.1.1.-</ecNumber>
    </recommendedName>
    <alternativeName>
        <fullName evidence="3">Satratoxin biosynthesis SC3 cluster protein 186</fullName>
    </alternativeName>
</protein>
<name>SAT18_STACB</name>
<dbReference type="EC" id="2.1.1.-" evidence="1"/>
<dbReference type="EMBL" id="KL648755">
    <property type="protein sequence ID" value="KEY64046.1"/>
    <property type="molecule type" value="Genomic_DNA"/>
</dbReference>
<dbReference type="SMR" id="A0A084AFG7"/>
<dbReference type="HOGENOM" id="CLU_005533_1_0_1"/>
<dbReference type="Proteomes" id="UP000028045">
    <property type="component" value="Unassembled WGS sequence"/>
</dbReference>
<dbReference type="GO" id="GO:0008171">
    <property type="term" value="F:O-methyltransferase activity"/>
    <property type="evidence" value="ECO:0007669"/>
    <property type="project" value="InterPro"/>
</dbReference>
<dbReference type="GO" id="GO:0046983">
    <property type="term" value="F:protein dimerization activity"/>
    <property type="evidence" value="ECO:0007669"/>
    <property type="project" value="InterPro"/>
</dbReference>
<dbReference type="GO" id="GO:0032259">
    <property type="term" value="P:methylation"/>
    <property type="evidence" value="ECO:0007669"/>
    <property type="project" value="UniProtKB-KW"/>
</dbReference>
<dbReference type="GO" id="GO:0044550">
    <property type="term" value="P:secondary metabolite biosynthetic process"/>
    <property type="evidence" value="ECO:0007669"/>
    <property type="project" value="UniProtKB-ARBA"/>
</dbReference>
<dbReference type="Gene3D" id="3.40.50.150">
    <property type="entry name" value="Vaccinia Virus protein VP39"/>
    <property type="match status" value="1"/>
</dbReference>
<dbReference type="Gene3D" id="1.10.10.10">
    <property type="entry name" value="Winged helix-like DNA-binding domain superfamily/Winged helix DNA-binding domain"/>
    <property type="match status" value="1"/>
</dbReference>
<dbReference type="InterPro" id="IPR016461">
    <property type="entry name" value="COMT-like"/>
</dbReference>
<dbReference type="InterPro" id="IPR001077">
    <property type="entry name" value="O_MeTrfase_dom"/>
</dbReference>
<dbReference type="InterPro" id="IPR012967">
    <property type="entry name" value="Plant_O-MeTrfase_dimerisation"/>
</dbReference>
<dbReference type="InterPro" id="IPR029063">
    <property type="entry name" value="SAM-dependent_MTases_sf"/>
</dbReference>
<dbReference type="InterPro" id="IPR036388">
    <property type="entry name" value="WH-like_DNA-bd_sf"/>
</dbReference>
<dbReference type="InterPro" id="IPR036390">
    <property type="entry name" value="WH_DNA-bd_sf"/>
</dbReference>
<dbReference type="PANTHER" id="PTHR43712:SF5">
    <property type="entry name" value="O-METHYLTRANSFERASE ASQN-RELATED"/>
    <property type="match status" value="1"/>
</dbReference>
<dbReference type="PANTHER" id="PTHR43712">
    <property type="entry name" value="PUTATIVE (AFU_ORTHOLOGUE AFUA_4G14580)-RELATED"/>
    <property type="match status" value="1"/>
</dbReference>
<dbReference type="Pfam" id="PF08100">
    <property type="entry name" value="Dimerisation"/>
    <property type="match status" value="1"/>
</dbReference>
<dbReference type="Pfam" id="PF00891">
    <property type="entry name" value="Methyltransf_2"/>
    <property type="match status" value="1"/>
</dbReference>
<dbReference type="SUPFAM" id="SSF53335">
    <property type="entry name" value="S-adenosyl-L-methionine-dependent methyltransferases"/>
    <property type="match status" value="1"/>
</dbReference>
<dbReference type="SUPFAM" id="SSF46785">
    <property type="entry name" value="Winged helix' DNA-binding domain"/>
    <property type="match status" value="1"/>
</dbReference>
<dbReference type="PROSITE" id="PS51683">
    <property type="entry name" value="SAM_OMT_II"/>
    <property type="match status" value="1"/>
</dbReference>
<accession>A0A084AFG7</accession>
<proteinExistence type="inferred from homology"/>
<reference key="1">
    <citation type="journal article" date="2014" name="BMC Genomics">
        <title>Comparative genome sequencing reveals chemotype-specific gene clusters in the toxigenic black mold Stachybotrys.</title>
        <authorList>
            <person name="Semeiks J."/>
            <person name="Borek D."/>
            <person name="Otwinowski Z."/>
            <person name="Grishin N.V."/>
        </authorList>
    </citation>
    <scope>NUCLEOTIDE SEQUENCE [LARGE SCALE GENOMIC DNA]</scope>
    <scope>IDENTIFICATION</scope>
    <scope>FUNCTION</scope>
    <source>
        <strain>CBS 109288 / IBT 7711</strain>
    </source>
</reference>
<comment type="function">
    <text evidence="5">O-methyltransferase; part of the satratoxin SC3 cluster involved in the biosynthesis of satratoxins, trichothecene mycotoxins that are associated with human food poisonings (PubMed:25015739). Satratoxins are suggested to be made by products of multiple gene clusters (SC1, SC2 and SC3) that encode 21 proteins in all, including polyketide synthases, acetyltransferases, and other enzymes expected to modify the trichothecene skeleton (PubMed:25015739). SC1 encodes 10 proteins, SAT1 to SAT10 (PubMed:25015739). The largest are SAT8, which encodes a putative polyketide synthase (PKS) with a conventional non-reducing architecture, and SAT10, a putative protein containing four ankyrin repeats and thus may be involved in protein scaffolding (PubMed:25015739). The putative short-chain reductase SAT3 may assist the PKS in some capacity (PubMed:25015739). SAT6 contains a secretory lipase domain and acts probably as a trichothecene esterase (PubMed:25015739). SAT5 encodes a putative acetyltransferase, and so, with SAT6, may affect endogenous protection from toxicity (PubMed:25015739). The probable transcription factor SAT9 may regulate the expression of the SC1 cluster (PubMed:25015739). SC2 encodes proteins SAT11 to SAT16, the largest of which encodes the putative reducing PKS SAT13 (PubMed:25015739). SAT11 is a cytochrome P450 monooxygenase, while SAT14 and SAT16 are probable acetyltransferases (PubMed:25015739). The SC2 cluster may be regulated by the transcription factor SAT15 (PubMed:25015739). SC3 is a small cluster that encodes 5 proteins, SAT17 to SAT21 (PubMed:25015739). SAT21 is a putative MFS-type transporter which may have a role in exporting secondary metabolites (PubMed:25015739). The four other proteins putatively encoded in SC3 include the taurine hydroxylase-like protein SAT17, the O-methyltransferase SAT18, the acetyltransferase SAT19, and the Cys6-type zinc finger SAT20, the latter being probably involved in regulation of SC3 expression (PubMed:25015739).</text>
</comment>
<comment type="pathway">
    <text evidence="2">Mycotoxin biosynthesis.</text>
</comment>
<comment type="miscellaneous">
    <text evidence="4">Trichothecenes are sesquiterpenoid toxins that act by inhibiting protein biosynthesis.</text>
</comment>
<comment type="similarity">
    <text evidence="1">Belongs to the class I-like SAM-binding methyltransferase superfamily. Cation-independent O-methyltransferase family.</text>
</comment>
<sequence length="401" mass="44904">MKLVEIAEDILSKANAYTNNTGLTSSQRFQLREEIRYQANGILSAIDGPEQTMKAIARSYTTCTALKVCVDLKLASHLPLSDARSLSQLAQICGCDSLVLRPMLRLLAKNGIFEQVDAETWQHTELSAVMAQPPFQALEEKYRSVAHLPRLLQAVSHQFPTPGRTAFNQVYCTSLDFYTYSNELDHAAARNFAFSMKELARNQIPFVQQSYPLETIDPESHFIDVAGGVGYLSFFLAGSFPKATFEVQDHPFIIEEAHSVCPSELRDRITFRAHNILHPQPEIAKEINGRLVFLVKIILHDHGDDDCRLMLRNLVSVMKQGDRILIIDTVIPETGGSLSSANSDIIIMSMFGSGHRTLEEFRALIHRCGEDLVIETFASGDEEYDGMMVIEVRKAEPVLDN</sequence>
<feature type="chain" id="PRO_0000442408" description="O-methyltransferase SAT18">
    <location>
        <begin position="1"/>
        <end position="401"/>
    </location>
</feature>
<feature type="active site" description="Proton acceptor" evidence="1">
    <location>
        <position position="300"/>
    </location>
</feature>
<feature type="binding site" evidence="1">
    <location>
        <position position="249"/>
    </location>
    <ligand>
        <name>S-adenosyl-L-methionine</name>
        <dbReference type="ChEBI" id="CHEBI:59789"/>
    </ligand>
</feature>
<organism>
    <name type="scientific">Stachybotrys chartarum (strain CBS 109288 / IBT 7711)</name>
    <name type="common">Toxic black mold</name>
    <name type="synonym">Stilbospora chartarum</name>
    <dbReference type="NCBI Taxonomy" id="1280523"/>
    <lineage>
        <taxon>Eukaryota</taxon>
        <taxon>Fungi</taxon>
        <taxon>Dikarya</taxon>
        <taxon>Ascomycota</taxon>
        <taxon>Pezizomycotina</taxon>
        <taxon>Sordariomycetes</taxon>
        <taxon>Hypocreomycetidae</taxon>
        <taxon>Hypocreales</taxon>
        <taxon>Stachybotryaceae</taxon>
        <taxon>Stachybotrys</taxon>
    </lineage>
</organism>
<keyword id="KW-0489">Methyltransferase</keyword>
<keyword id="KW-0949">S-adenosyl-L-methionine</keyword>
<keyword id="KW-0808">Transferase</keyword>